<gene>
    <name evidence="1" type="primary">tsf</name>
    <name type="ordered locus">mma_2057</name>
</gene>
<dbReference type="EMBL" id="CP000269">
    <property type="protein sequence ID" value="ABR89180.1"/>
    <property type="molecule type" value="Genomic_DNA"/>
</dbReference>
<dbReference type="RefSeq" id="WP_012079910.1">
    <property type="nucleotide sequence ID" value="NC_009659.1"/>
</dbReference>
<dbReference type="SMR" id="A6SZQ0"/>
<dbReference type="STRING" id="375286.mma_2057"/>
<dbReference type="KEGG" id="mms:mma_2057"/>
<dbReference type="eggNOG" id="COG0264">
    <property type="taxonomic scope" value="Bacteria"/>
</dbReference>
<dbReference type="HOGENOM" id="CLU_047155_0_2_4"/>
<dbReference type="OrthoDB" id="9808348at2"/>
<dbReference type="Proteomes" id="UP000006388">
    <property type="component" value="Chromosome"/>
</dbReference>
<dbReference type="GO" id="GO:0005737">
    <property type="term" value="C:cytoplasm"/>
    <property type="evidence" value="ECO:0007669"/>
    <property type="project" value="UniProtKB-SubCell"/>
</dbReference>
<dbReference type="GO" id="GO:0003746">
    <property type="term" value="F:translation elongation factor activity"/>
    <property type="evidence" value="ECO:0007669"/>
    <property type="project" value="UniProtKB-UniRule"/>
</dbReference>
<dbReference type="CDD" id="cd14275">
    <property type="entry name" value="UBA_EF-Ts"/>
    <property type="match status" value="1"/>
</dbReference>
<dbReference type="FunFam" id="1.10.286.20:FF:000001">
    <property type="entry name" value="Elongation factor Ts"/>
    <property type="match status" value="1"/>
</dbReference>
<dbReference type="FunFam" id="1.10.8.10:FF:000001">
    <property type="entry name" value="Elongation factor Ts"/>
    <property type="match status" value="1"/>
</dbReference>
<dbReference type="Gene3D" id="1.10.286.20">
    <property type="match status" value="1"/>
</dbReference>
<dbReference type="Gene3D" id="1.10.8.10">
    <property type="entry name" value="DNA helicase RuvA subunit, C-terminal domain"/>
    <property type="match status" value="1"/>
</dbReference>
<dbReference type="Gene3D" id="3.30.479.20">
    <property type="entry name" value="Elongation factor Ts, dimerisation domain"/>
    <property type="match status" value="2"/>
</dbReference>
<dbReference type="HAMAP" id="MF_00050">
    <property type="entry name" value="EF_Ts"/>
    <property type="match status" value="1"/>
</dbReference>
<dbReference type="InterPro" id="IPR036402">
    <property type="entry name" value="EF-Ts_dimer_sf"/>
</dbReference>
<dbReference type="InterPro" id="IPR001816">
    <property type="entry name" value="Transl_elong_EFTs/EF1B"/>
</dbReference>
<dbReference type="InterPro" id="IPR014039">
    <property type="entry name" value="Transl_elong_EFTs/EF1B_dimer"/>
</dbReference>
<dbReference type="InterPro" id="IPR018101">
    <property type="entry name" value="Transl_elong_Ts_CS"/>
</dbReference>
<dbReference type="InterPro" id="IPR009060">
    <property type="entry name" value="UBA-like_sf"/>
</dbReference>
<dbReference type="NCBIfam" id="TIGR00116">
    <property type="entry name" value="tsf"/>
    <property type="match status" value="1"/>
</dbReference>
<dbReference type="PANTHER" id="PTHR11741">
    <property type="entry name" value="ELONGATION FACTOR TS"/>
    <property type="match status" value="1"/>
</dbReference>
<dbReference type="PANTHER" id="PTHR11741:SF0">
    <property type="entry name" value="ELONGATION FACTOR TS, MITOCHONDRIAL"/>
    <property type="match status" value="1"/>
</dbReference>
<dbReference type="Pfam" id="PF00889">
    <property type="entry name" value="EF_TS"/>
    <property type="match status" value="1"/>
</dbReference>
<dbReference type="SUPFAM" id="SSF54713">
    <property type="entry name" value="Elongation factor Ts (EF-Ts), dimerisation domain"/>
    <property type="match status" value="2"/>
</dbReference>
<dbReference type="SUPFAM" id="SSF46934">
    <property type="entry name" value="UBA-like"/>
    <property type="match status" value="1"/>
</dbReference>
<dbReference type="PROSITE" id="PS01127">
    <property type="entry name" value="EF_TS_2"/>
    <property type="match status" value="1"/>
</dbReference>
<proteinExistence type="inferred from homology"/>
<name>EFTS_JANMA</name>
<reference key="1">
    <citation type="journal article" date="2007" name="PLoS Genet.">
        <title>Genome analysis of Minibacterium massiliensis highlights the convergent evolution of water-living bacteria.</title>
        <authorList>
            <person name="Audic S."/>
            <person name="Robert C."/>
            <person name="Campagna B."/>
            <person name="Parinello H."/>
            <person name="Claverie J.-M."/>
            <person name="Raoult D."/>
            <person name="Drancourt M."/>
        </authorList>
    </citation>
    <scope>NUCLEOTIDE SEQUENCE [LARGE SCALE GENOMIC DNA]</scope>
    <source>
        <strain>Marseille</strain>
    </source>
</reference>
<feature type="chain" id="PRO_1000006109" description="Elongation factor Ts">
    <location>
        <begin position="1"/>
        <end position="293"/>
    </location>
</feature>
<feature type="region of interest" description="Involved in Mg(2+) ion dislocation from EF-Tu" evidence="1">
    <location>
        <begin position="80"/>
        <end position="83"/>
    </location>
</feature>
<keyword id="KW-0963">Cytoplasm</keyword>
<keyword id="KW-0251">Elongation factor</keyword>
<keyword id="KW-0648">Protein biosynthesis</keyword>
<protein>
    <recommendedName>
        <fullName evidence="1">Elongation factor Ts</fullName>
        <shortName evidence="1">EF-Ts</shortName>
    </recommendedName>
</protein>
<comment type="function">
    <text evidence="1">Associates with the EF-Tu.GDP complex and induces the exchange of GDP to GTP. It remains bound to the aminoacyl-tRNA.EF-Tu.GTP complex up to the GTP hydrolysis stage on the ribosome.</text>
</comment>
<comment type="subcellular location">
    <subcellularLocation>
        <location evidence="1">Cytoplasm</location>
    </subcellularLocation>
</comment>
<comment type="similarity">
    <text evidence="1">Belongs to the EF-Ts family.</text>
</comment>
<sequence length="293" mass="31238">MAVITAAMVGELRALTDAPMMECKKALTEADGDPVKAEEILRVKLGSKASKAATRVTAEGVVAAYVSGNVGALIEVNCETDFVTKNDDFLGFANTLVKLVAEKNPADVAALSALPLEGKTVEETRAALIGRIGENMSIRRFVRFETTGKLASYLHGTRIGVMVDFEGADEQVGKDVAMHIAAMKPVALSSDNVPADLIAKERSVAELKAAESNKPADIVAKMIEGSVQKYLKEVSLLNQSFVKNDKQTVEQMLKEAKSTVKSFTMFVVGEGIEKKQDDFAAEVAAQVAAAKQA</sequence>
<accession>A6SZQ0</accession>
<evidence type="ECO:0000255" key="1">
    <source>
        <dbReference type="HAMAP-Rule" id="MF_00050"/>
    </source>
</evidence>
<organism>
    <name type="scientific">Janthinobacterium sp. (strain Marseille)</name>
    <name type="common">Minibacterium massiliensis</name>
    <dbReference type="NCBI Taxonomy" id="375286"/>
    <lineage>
        <taxon>Bacteria</taxon>
        <taxon>Pseudomonadati</taxon>
        <taxon>Pseudomonadota</taxon>
        <taxon>Betaproteobacteria</taxon>
        <taxon>Burkholderiales</taxon>
        <taxon>Oxalobacteraceae</taxon>
        <taxon>Janthinobacterium</taxon>
    </lineage>
</organism>